<dbReference type="EC" id="6.2.1.76"/>
<dbReference type="EMBL" id="AY250842">
    <property type="protein sequence ID" value="AAP03025.1"/>
    <property type="molecule type" value="mRNA"/>
</dbReference>
<dbReference type="EMBL" id="AB012247">
    <property type="protein sequence ID" value="BAB02683.1"/>
    <property type="status" value="ALT_SEQ"/>
    <property type="molecule type" value="Genomic_DNA"/>
</dbReference>
<dbReference type="EMBL" id="CP002686">
    <property type="protein sequence ID" value="AEE75779.2"/>
    <property type="molecule type" value="Genomic_DNA"/>
</dbReference>
<dbReference type="EMBL" id="AY084636">
    <property type="protein sequence ID" value="AAM61199.1"/>
    <property type="status" value="ALT_INIT"/>
    <property type="molecule type" value="mRNA"/>
</dbReference>
<dbReference type="EMBL" id="BT000771">
    <property type="protein sequence ID" value="AAN31910.1"/>
    <property type="status" value="ALT_INIT"/>
    <property type="molecule type" value="mRNA"/>
</dbReference>
<dbReference type="RefSeq" id="NP_001319565.1">
    <property type="nucleotide sequence ID" value="NM_001338210.1"/>
</dbReference>
<dbReference type="SMR" id="Q8H151"/>
<dbReference type="BioGRID" id="6196">
    <property type="interactions" value="2"/>
</dbReference>
<dbReference type="FunCoup" id="Q8H151">
    <property type="interactions" value="2878"/>
</dbReference>
<dbReference type="STRING" id="3702.Q8H151"/>
<dbReference type="PaxDb" id="3702-AT3G16170.1"/>
<dbReference type="ProteomicsDB" id="243269"/>
<dbReference type="EnsemblPlants" id="AT3G16170.1">
    <property type="protein sequence ID" value="AT3G16170.1"/>
    <property type="gene ID" value="AT3G16170"/>
</dbReference>
<dbReference type="GeneID" id="820862"/>
<dbReference type="Gramene" id="AT3G16170.1">
    <property type="protein sequence ID" value="AT3G16170.1"/>
    <property type="gene ID" value="AT3G16170"/>
</dbReference>
<dbReference type="KEGG" id="ath:AT3G16170"/>
<dbReference type="Araport" id="AT3G16170"/>
<dbReference type="TAIR" id="AT3G16170">
    <property type="gene designation" value="AAE13"/>
</dbReference>
<dbReference type="eggNOG" id="KOG1176">
    <property type="taxonomic scope" value="Eukaryota"/>
</dbReference>
<dbReference type="HOGENOM" id="CLU_000022_59_11_1"/>
<dbReference type="InParanoid" id="Q8H151"/>
<dbReference type="OMA" id="IYEYYGM"/>
<dbReference type="PRO" id="PR:Q8H151"/>
<dbReference type="Proteomes" id="UP000006548">
    <property type="component" value="Chromosome 3"/>
</dbReference>
<dbReference type="ExpressionAtlas" id="Q8H151">
    <property type="expression patterns" value="baseline and differential"/>
</dbReference>
<dbReference type="GO" id="GO:0005829">
    <property type="term" value="C:cytosol"/>
    <property type="evidence" value="ECO:0000314"/>
    <property type="project" value="TAIR"/>
</dbReference>
<dbReference type="GO" id="GO:0005739">
    <property type="term" value="C:mitochondrion"/>
    <property type="evidence" value="ECO:0000314"/>
    <property type="project" value="TAIR"/>
</dbReference>
<dbReference type="GO" id="GO:0005634">
    <property type="term" value="C:nucleus"/>
    <property type="evidence" value="ECO:0000314"/>
    <property type="project" value="TAIR"/>
</dbReference>
<dbReference type="GO" id="GO:0090409">
    <property type="term" value="F:malonyl-CoA synthetase activity"/>
    <property type="evidence" value="ECO:0000314"/>
    <property type="project" value="TAIR"/>
</dbReference>
<dbReference type="GO" id="GO:0006633">
    <property type="term" value="P:fatty acid biosynthetic process"/>
    <property type="evidence" value="ECO:0000315"/>
    <property type="project" value="TAIR"/>
</dbReference>
<dbReference type="GO" id="GO:0090410">
    <property type="term" value="P:malonate catabolic process"/>
    <property type="evidence" value="ECO:0000315"/>
    <property type="project" value="TAIR"/>
</dbReference>
<dbReference type="CDD" id="cd05941">
    <property type="entry name" value="MCS"/>
    <property type="match status" value="1"/>
</dbReference>
<dbReference type="FunFam" id="3.30.300.30:FF:000031">
    <property type="entry name" value="Acyl-CoA synthetase family member 3"/>
    <property type="match status" value="1"/>
</dbReference>
<dbReference type="FunFam" id="3.40.50.12780:FF:000030">
    <property type="entry name" value="Acyl-CoA synthetase family member 3"/>
    <property type="match status" value="1"/>
</dbReference>
<dbReference type="Gene3D" id="3.30.300.30">
    <property type="match status" value="1"/>
</dbReference>
<dbReference type="Gene3D" id="3.40.50.12780">
    <property type="entry name" value="N-terminal domain of ligase-like"/>
    <property type="match status" value="1"/>
</dbReference>
<dbReference type="InterPro" id="IPR025110">
    <property type="entry name" value="AMP-bd_C"/>
</dbReference>
<dbReference type="InterPro" id="IPR045851">
    <property type="entry name" value="AMP-bd_C_sf"/>
</dbReference>
<dbReference type="InterPro" id="IPR020845">
    <property type="entry name" value="AMP-binding_CS"/>
</dbReference>
<dbReference type="InterPro" id="IPR000873">
    <property type="entry name" value="AMP-dep_synth/lig_dom"/>
</dbReference>
<dbReference type="InterPro" id="IPR042099">
    <property type="entry name" value="ANL_N_sf"/>
</dbReference>
<dbReference type="PANTHER" id="PTHR43201">
    <property type="entry name" value="ACYL-COA SYNTHETASE"/>
    <property type="match status" value="1"/>
</dbReference>
<dbReference type="PANTHER" id="PTHR43201:SF8">
    <property type="entry name" value="ACYL-COA SYNTHETASE FAMILY MEMBER 3"/>
    <property type="match status" value="1"/>
</dbReference>
<dbReference type="Pfam" id="PF00501">
    <property type="entry name" value="AMP-binding"/>
    <property type="match status" value="1"/>
</dbReference>
<dbReference type="Pfam" id="PF13193">
    <property type="entry name" value="AMP-binding_C"/>
    <property type="match status" value="1"/>
</dbReference>
<dbReference type="SUPFAM" id="SSF56801">
    <property type="entry name" value="Acetyl-CoA synthetase-like"/>
    <property type="match status" value="1"/>
</dbReference>
<dbReference type="PROSITE" id="PS00455">
    <property type="entry name" value="AMP_BINDING"/>
    <property type="match status" value="1"/>
</dbReference>
<organism>
    <name type="scientific">Arabidopsis thaliana</name>
    <name type="common">Mouse-ear cress</name>
    <dbReference type="NCBI Taxonomy" id="3702"/>
    <lineage>
        <taxon>Eukaryota</taxon>
        <taxon>Viridiplantae</taxon>
        <taxon>Streptophyta</taxon>
        <taxon>Embryophyta</taxon>
        <taxon>Tracheophyta</taxon>
        <taxon>Spermatophyta</taxon>
        <taxon>Magnoliopsida</taxon>
        <taxon>eudicotyledons</taxon>
        <taxon>Gunneridae</taxon>
        <taxon>Pentapetalae</taxon>
        <taxon>rosids</taxon>
        <taxon>malvids</taxon>
        <taxon>Brassicales</taxon>
        <taxon>Brassicaceae</taxon>
        <taxon>Camelineae</taxon>
        <taxon>Arabidopsis</taxon>
    </lineage>
</organism>
<gene>
    <name type="primary">AAE13</name>
    <name type="ordered locus">At3g16170</name>
    <name type="ORF">MSL1.21</name>
</gene>
<comment type="function">
    <text evidence="2">Malonate--CoA ligase that catalyzes the formation of malonyl-CoA directly from malonate and CoA. May be required for the detoxification of malonate.</text>
</comment>
<comment type="catalytic activity">
    <reaction evidence="2">
        <text>malonate + ATP + CoA = malonyl-CoA + AMP + diphosphate</text>
        <dbReference type="Rhea" id="RHEA:32139"/>
        <dbReference type="ChEBI" id="CHEBI:15792"/>
        <dbReference type="ChEBI" id="CHEBI:30616"/>
        <dbReference type="ChEBI" id="CHEBI:33019"/>
        <dbReference type="ChEBI" id="CHEBI:57287"/>
        <dbReference type="ChEBI" id="CHEBI:57384"/>
        <dbReference type="ChEBI" id="CHEBI:456215"/>
        <dbReference type="EC" id="6.2.1.76"/>
    </reaction>
</comment>
<comment type="biophysicochemical properties">
    <kinetics>
        <KM evidence="2">530 uM for malonate (at pH 7.5)</KM>
        <Vmax evidence="2">24.0 umol/min/mg enzyme toward malonate (at pH 7.5)</Vmax>
    </kinetics>
    <phDependence>
        <text evidence="2">Optimum pH is 6.5-8.0.</text>
    </phDependence>
</comment>
<comment type="subcellular location">
    <subcellularLocation>
        <location evidence="2">Cytoplasm</location>
    </subcellularLocation>
    <subcellularLocation>
        <location evidence="2">Nucleus</location>
    </subcellularLocation>
</comment>
<comment type="tissue specificity">
    <text evidence="1 2">Expressed in flowers.</text>
</comment>
<comment type="induction">
    <text evidence="2">By abscisic acid (ABA) and osmotic stress.</text>
</comment>
<comment type="disruption phenotype">
    <text evidence="2">Strong defects in growth and development and most of the plants die before flowering. Viable plants have a greatly reduced seed set with a low proportion of viable seed and accumulate malonate and succinate.</text>
</comment>
<comment type="miscellaneous">
    <text>Plants overexpressing AAE13 show increased sensitivity to exogenous malonate.</text>
</comment>
<comment type="similarity">
    <text evidence="3">Belongs to the ATP-dependent AMP-binding enzyme family.</text>
</comment>
<comment type="sequence caution" evidence="3">
    <conflict type="erroneous initiation">
        <sequence resource="EMBL-CDS" id="AAM61199"/>
    </conflict>
    <text>Truncated N-terminus.</text>
</comment>
<comment type="sequence caution" evidence="3">
    <conflict type="erroneous initiation">
        <sequence resource="EMBL-CDS" id="AAN31910"/>
    </conflict>
    <text>Truncated N-terminus.</text>
</comment>
<comment type="sequence caution" evidence="3">
    <conflict type="erroneous gene model prediction">
        <sequence resource="EMBL-CDS" id="BAB02683"/>
    </conflict>
</comment>
<feature type="chain" id="PRO_0000415724" description="Malonate--CoA ligase">
    <location>
        <begin position="1"/>
        <end position="608"/>
    </location>
</feature>
<feature type="sequence conflict" description="In Ref. 4; AAN31910." evidence="3" ref="4">
    <original>P</original>
    <variation>T</variation>
    <location>
        <position position="38"/>
    </location>
</feature>
<feature type="sequence conflict" description="In Ref. 3; AAM61199." evidence="3" ref="3">
    <original>S</original>
    <variation>F</variation>
    <location>
        <position position="44"/>
    </location>
</feature>
<feature type="sequence conflict" description="In Ref. 3; AAM61199." evidence="3" ref="3">
    <original>N</original>
    <variation>K</variation>
    <location>
        <position position="417"/>
    </location>
</feature>
<name>AAE13_ARATH</name>
<reference key="1">
    <citation type="journal article" date="2000" name="DNA Res.">
        <title>Structural analysis of Arabidopsis thaliana chromosome 3. I. Sequence features of the regions of 4,504,864 bp covered by sixty P1 and TAC clones.</title>
        <authorList>
            <person name="Sato S."/>
            <person name="Nakamura Y."/>
            <person name="Kaneko T."/>
            <person name="Katoh T."/>
            <person name="Asamizu E."/>
            <person name="Tabata S."/>
        </authorList>
    </citation>
    <scope>NUCLEOTIDE SEQUENCE [LARGE SCALE GENOMIC DNA]</scope>
    <source>
        <strain>cv. Columbia</strain>
    </source>
</reference>
<reference key="2">
    <citation type="journal article" date="2017" name="Plant J.">
        <title>Araport11: a complete reannotation of the Arabidopsis thaliana reference genome.</title>
        <authorList>
            <person name="Cheng C.Y."/>
            <person name="Krishnakumar V."/>
            <person name="Chan A.P."/>
            <person name="Thibaud-Nissen F."/>
            <person name="Schobel S."/>
            <person name="Town C.D."/>
        </authorList>
    </citation>
    <scope>GENOME REANNOTATION</scope>
    <source>
        <strain>cv. Columbia</strain>
    </source>
</reference>
<reference key="3">
    <citation type="submission" date="2002-03" db="EMBL/GenBank/DDBJ databases">
        <title>Full-length cDNA from Arabidopsis thaliana.</title>
        <authorList>
            <person name="Brover V.V."/>
            <person name="Troukhan M.E."/>
            <person name="Alexandrov N.A."/>
            <person name="Lu Y.-P."/>
            <person name="Flavell R.B."/>
            <person name="Feldmann K.A."/>
        </authorList>
    </citation>
    <scope>NUCLEOTIDE SEQUENCE [LARGE SCALE MRNA] OF 25-608</scope>
    <source>
        <strain>cv. Columbia</strain>
    </source>
</reference>
<reference key="4">
    <citation type="journal article" date="2003" name="Science">
        <title>Empirical analysis of transcriptional activity in the Arabidopsis genome.</title>
        <authorList>
            <person name="Yamada K."/>
            <person name="Lim J."/>
            <person name="Dale J.M."/>
            <person name="Chen H."/>
            <person name="Shinn P."/>
            <person name="Palm C.J."/>
            <person name="Southwick A.M."/>
            <person name="Wu H.C."/>
            <person name="Kim C.J."/>
            <person name="Nguyen M."/>
            <person name="Pham P.K."/>
            <person name="Cheuk R.F."/>
            <person name="Karlin-Newmann G."/>
            <person name="Liu S.X."/>
            <person name="Lam B."/>
            <person name="Sakano H."/>
            <person name="Wu T."/>
            <person name="Yu G."/>
            <person name="Miranda M."/>
            <person name="Quach H.L."/>
            <person name="Tripp M."/>
            <person name="Chang C.H."/>
            <person name="Lee J.M."/>
            <person name="Toriumi M.J."/>
            <person name="Chan M.M."/>
            <person name="Tang C.C."/>
            <person name="Onodera C.S."/>
            <person name="Deng J.M."/>
            <person name="Akiyama K."/>
            <person name="Ansari Y."/>
            <person name="Arakawa T."/>
            <person name="Banh J."/>
            <person name="Banno F."/>
            <person name="Bowser L."/>
            <person name="Brooks S.Y."/>
            <person name="Carninci P."/>
            <person name="Chao Q."/>
            <person name="Choy N."/>
            <person name="Enju A."/>
            <person name="Goldsmith A.D."/>
            <person name="Gurjal M."/>
            <person name="Hansen N.F."/>
            <person name="Hayashizaki Y."/>
            <person name="Johnson-Hopson C."/>
            <person name="Hsuan V.W."/>
            <person name="Iida K."/>
            <person name="Karnes M."/>
            <person name="Khan S."/>
            <person name="Koesema E."/>
            <person name="Ishida J."/>
            <person name="Jiang P.X."/>
            <person name="Jones T."/>
            <person name="Kawai J."/>
            <person name="Kamiya A."/>
            <person name="Meyers C."/>
            <person name="Nakajima M."/>
            <person name="Narusaka M."/>
            <person name="Seki M."/>
            <person name="Sakurai T."/>
            <person name="Satou M."/>
            <person name="Tamse R."/>
            <person name="Vaysberg M."/>
            <person name="Wallender E.K."/>
            <person name="Wong C."/>
            <person name="Yamamura Y."/>
            <person name="Yuan S."/>
            <person name="Shinozaki K."/>
            <person name="Davis R.W."/>
            <person name="Theologis A."/>
            <person name="Ecker J.R."/>
        </authorList>
    </citation>
    <scope>NUCLEOTIDE SEQUENCE [LARGE SCALE MRNA] OF 26-608</scope>
    <source>
        <strain>cv. Columbia</strain>
    </source>
</reference>
<reference key="5">
    <citation type="journal article" date="2003" name="Plant Physiol.">
        <title>Arabidopsis contains a large superfamily of acyl-activating enzymes. Phylogenetic and biochemical analysis reveals a new class of acyl-coenzyme a synthetases.</title>
        <authorList>
            <person name="Shockey J.M."/>
            <person name="Fulda M.S."/>
            <person name="Browse J."/>
        </authorList>
    </citation>
    <scope>NUCLEOTIDE SEQUENCE [MRNA] OF 65-608</scope>
    <scope>TISSUE SPECIFICITY</scope>
    <scope>GENE FAMILY</scope>
    <scope>NOMENCLATURE</scope>
</reference>
<reference key="6">
    <citation type="journal article" date="2011" name="Plant Cell">
        <title>Malonyl-CoA synthetase, encoded by ACYL ACTIVATING ENZYME13, is essential for growth and development of arabidopsis.</title>
        <authorList>
            <person name="Chen H."/>
            <person name="Kim H.U."/>
            <person name="Weng H."/>
            <person name="Browse J."/>
        </authorList>
    </citation>
    <scope>FUNCTION</scope>
    <scope>CATALYTIC ACTIVITY</scope>
    <scope>BIOPHYSICOCHEMICAL PROPERTIES</scope>
    <scope>SUBCELLULAR LOCATION</scope>
    <scope>TISSUE SPECIFICITY</scope>
    <scope>INDUCTION</scope>
    <scope>DISRUPTION PHENOTYPE</scope>
</reference>
<proteinExistence type="evidence at protein level"/>
<sequence length="608" mass="67164">MTATTTLKSFNYLSLINHRLNHNSYAILSSPLLPRSHPASTSFSNSGFRFFQSNHLFSSQSGSLMEVFKAAFSEASNSCDRIAIKADGKSYSYGQLTSSALRISKLFLKDDTTNGGQETKKYEGFGSLKGARIGIVAKPSAEFVAGVLGTWFSGGVAVPLALSYPEAELLHVMNDSDISLLLSTEDHSETMKTIAAKSGARFHLIPPVVNSTSETVACNQFQDDSFEAEGKFLDDPALIVYTSGTTGKPKGVVHTHNSINSQVRMLTEAWEYTSADHFLHCLPLHHVHGLFNALFAPLYARSLVEFLPKFSVSGIWRRWRESYPVNDEKTNDSITVFTGVPTMYTRLIQGYEAMDKEMQDSSAFAARKLRLMMSGSSALPRPVMHQWESITGHRLLERYGMTEFVMAMSNPLRGARNAGTVGKPLPGVEAKIKEDENDANGVGEICVKSPSLFKEYWNLPEVTKESFTEDGYFKTGDAGRVDEDGYYVILGRNSADIMKVGGYKLSALEIESTLLEHPTVAECCVLGLTDNDYGEAVTAIIIAESAAKKRREDESKPVITLEELCGWAKDKLAPYKLPTRLLIWESLPRNAMGKVNKKELKKSLENQE</sequence>
<evidence type="ECO:0000269" key="1">
    <source>
    </source>
</evidence>
<evidence type="ECO:0000269" key="2">
    <source>
    </source>
</evidence>
<evidence type="ECO:0000305" key="3"/>
<protein>
    <recommendedName>
        <fullName>Malonate--CoA ligase</fullName>
        <ecNumber>6.2.1.76</ecNumber>
    </recommendedName>
    <alternativeName>
        <fullName>Acyl-activating enzyme 13</fullName>
    </alternativeName>
    <alternativeName>
        <fullName>Malonyl-CoA synthetase</fullName>
    </alternativeName>
</protein>
<keyword id="KW-0963">Cytoplasm</keyword>
<keyword id="KW-0276">Fatty acid metabolism</keyword>
<keyword id="KW-0436">Ligase</keyword>
<keyword id="KW-0443">Lipid metabolism</keyword>
<keyword id="KW-0539">Nucleus</keyword>
<keyword id="KW-1185">Reference proteome</keyword>
<accession>Q8H151</accession>
<accession>Q8LFU5</accession>
<accession>Q9LW70</accession>